<protein>
    <recommendedName>
        <fullName evidence="1">Elongation factor 4</fullName>
        <shortName evidence="1">EF-4</shortName>
        <ecNumber evidence="1">3.6.5.n1</ecNumber>
    </recommendedName>
    <alternativeName>
        <fullName evidence="1">Ribosomal back-translocase LepA</fullName>
    </alternativeName>
</protein>
<sequence>MKNIRNFSIIAHIDHGKSTLSDRIIQICGGLSDREMEAQVLDSMDLERERGITIKAQSVTLDYKASDGETYQLNFIDTPGHVDFSYEVSRSLAACEGALLVVDAGQGVEAQTLANCYTAMEMDLEVVPVLNKIDLPAADPERVADEIEDIVGIDAHDAVRCSAKTGVGVTDVLERLVRDIPPPEGDPDAPLQALIIDSWFDNYLGVVSLVRIKNGTMRKGDKIKVMSTGQVYNADRLGIFTPKQVDRTELKCGEVGWLVCAIKDILGAPVGDTLTAARNPADKALPGFKKVKPQVYAGLFPVSSDDYEAFRDALGKLSLNDASLFYEPESSTALGFGFRCGFLGLLHMEIIQERLEREYDLDLITTAPTVVYEVETTSKEVIYVDSPSKLPPLNNIQELREPIAECHMLLPQEFLGNVITLCVEKRGVQTNMVYHGKQVALTYEIPMAEVVLDFFDRLKSTSRGYASLDYNFKRFQASNMVRVDVLINGERVDALALITHNDNAPYRGRELVEKMKDLIPRQQFDIAIQAAIGNHIIARSTVKQLRKNVLAKCYGGDVSRKKKLLQKQKEGKKRMKQVGNVELPQEAFLAILHVGKDGK</sequence>
<feature type="chain" id="PRO_1000032007" description="Elongation factor 4">
    <location>
        <begin position="1"/>
        <end position="599"/>
    </location>
</feature>
<feature type="domain" description="tr-type G">
    <location>
        <begin position="2"/>
        <end position="184"/>
    </location>
</feature>
<feature type="binding site" evidence="1">
    <location>
        <begin position="14"/>
        <end position="19"/>
    </location>
    <ligand>
        <name>GTP</name>
        <dbReference type="ChEBI" id="CHEBI:37565"/>
    </ligand>
</feature>
<feature type="binding site" evidence="1">
    <location>
        <begin position="131"/>
        <end position="134"/>
    </location>
    <ligand>
        <name>GTP</name>
        <dbReference type="ChEBI" id="CHEBI:37565"/>
    </ligand>
</feature>
<dbReference type="EC" id="3.6.5.n1" evidence="1"/>
<dbReference type="EMBL" id="CP000647">
    <property type="protein sequence ID" value="ABR78304.1"/>
    <property type="molecule type" value="Genomic_DNA"/>
</dbReference>
<dbReference type="RefSeq" id="WP_002914069.1">
    <property type="nucleotide sequence ID" value="NC_009648.1"/>
</dbReference>
<dbReference type="SMR" id="A6TCI3"/>
<dbReference type="STRING" id="272620.KPN_02894"/>
<dbReference type="jPOST" id="A6TCI3"/>
<dbReference type="PaxDb" id="272620-KPN_02894"/>
<dbReference type="EnsemblBacteria" id="ABR78304">
    <property type="protein sequence ID" value="ABR78304"/>
    <property type="gene ID" value="KPN_02894"/>
</dbReference>
<dbReference type="KEGG" id="kpn:KPN_02894"/>
<dbReference type="HOGENOM" id="CLU_009995_3_3_6"/>
<dbReference type="Proteomes" id="UP000000265">
    <property type="component" value="Chromosome"/>
</dbReference>
<dbReference type="GO" id="GO:0005886">
    <property type="term" value="C:plasma membrane"/>
    <property type="evidence" value="ECO:0007669"/>
    <property type="project" value="UniProtKB-SubCell"/>
</dbReference>
<dbReference type="GO" id="GO:0005525">
    <property type="term" value="F:GTP binding"/>
    <property type="evidence" value="ECO:0007669"/>
    <property type="project" value="UniProtKB-UniRule"/>
</dbReference>
<dbReference type="GO" id="GO:0003924">
    <property type="term" value="F:GTPase activity"/>
    <property type="evidence" value="ECO:0007669"/>
    <property type="project" value="UniProtKB-UniRule"/>
</dbReference>
<dbReference type="GO" id="GO:0097216">
    <property type="term" value="F:guanosine tetraphosphate binding"/>
    <property type="evidence" value="ECO:0007669"/>
    <property type="project" value="UniProtKB-ARBA"/>
</dbReference>
<dbReference type="GO" id="GO:0043022">
    <property type="term" value="F:ribosome binding"/>
    <property type="evidence" value="ECO:0007669"/>
    <property type="project" value="UniProtKB-UniRule"/>
</dbReference>
<dbReference type="GO" id="GO:0003746">
    <property type="term" value="F:translation elongation factor activity"/>
    <property type="evidence" value="ECO:0007669"/>
    <property type="project" value="UniProtKB-UniRule"/>
</dbReference>
<dbReference type="GO" id="GO:0045727">
    <property type="term" value="P:positive regulation of translation"/>
    <property type="evidence" value="ECO:0007669"/>
    <property type="project" value="UniProtKB-UniRule"/>
</dbReference>
<dbReference type="CDD" id="cd03699">
    <property type="entry name" value="EF4_II"/>
    <property type="match status" value="1"/>
</dbReference>
<dbReference type="CDD" id="cd16260">
    <property type="entry name" value="EF4_III"/>
    <property type="match status" value="1"/>
</dbReference>
<dbReference type="CDD" id="cd01890">
    <property type="entry name" value="LepA"/>
    <property type="match status" value="1"/>
</dbReference>
<dbReference type="CDD" id="cd03709">
    <property type="entry name" value="lepA_C"/>
    <property type="match status" value="1"/>
</dbReference>
<dbReference type="FunFam" id="3.30.70.240:FF:000005">
    <property type="entry name" value="Elongation factor 4"/>
    <property type="match status" value="1"/>
</dbReference>
<dbReference type="FunFam" id="3.40.50.300:FF:000078">
    <property type="entry name" value="Elongation factor 4"/>
    <property type="match status" value="1"/>
</dbReference>
<dbReference type="FunFam" id="2.40.30.10:FF:000015">
    <property type="entry name" value="Translation factor GUF1, mitochondrial"/>
    <property type="match status" value="1"/>
</dbReference>
<dbReference type="FunFam" id="3.30.70.2570:FF:000001">
    <property type="entry name" value="Translation factor GUF1, mitochondrial"/>
    <property type="match status" value="1"/>
</dbReference>
<dbReference type="FunFam" id="3.30.70.870:FF:000004">
    <property type="entry name" value="Translation factor GUF1, mitochondrial"/>
    <property type="match status" value="1"/>
</dbReference>
<dbReference type="Gene3D" id="3.30.70.240">
    <property type="match status" value="1"/>
</dbReference>
<dbReference type="Gene3D" id="3.30.70.2570">
    <property type="entry name" value="Elongation factor 4, C-terminal domain"/>
    <property type="match status" value="1"/>
</dbReference>
<dbReference type="Gene3D" id="3.30.70.870">
    <property type="entry name" value="Elongation Factor G (Translational Gtpase), domain 3"/>
    <property type="match status" value="1"/>
</dbReference>
<dbReference type="Gene3D" id="3.40.50.300">
    <property type="entry name" value="P-loop containing nucleotide triphosphate hydrolases"/>
    <property type="match status" value="1"/>
</dbReference>
<dbReference type="Gene3D" id="2.40.30.10">
    <property type="entry name" value="Translation factors"/>
    <property type="match status" value="1"/>
</dbReference>
<dbReference type="HAMAP" id="MF_00071">
    <property type="entry name" value="LepA"/>
    <property type="match status" value="1"/>
</dbReference>
<dbReference type="InterPro" id="IPR006297">
    <property type="entry name" value="EF-4"/>
</dbReference>
<dbReference type="InterPro" id="IPR035647">
    <property type="entry name" value="EFG_III/V"/>
</dbReference>
<dbReference type="InterPro" id="IPR000640">
    <property type="entry name" value="EFG_V-like"/>
</dbReference>
<dbReference type="InterPro" id="IPR004161">
    <property type="entry name" value="EFTu-like_2"/>
</dbReference>
<dbReference type="InterPro" id="IPR031157">
    <property type="entry name" value="G_TR_CS"/>
</dbReference>
<dbReference type="InterPro" id="IPR038363">
    <property type="entry name" value="LepA_C_sf"/>
</dbReference>
<dbReference type="InterPro" id="IPR013842">
    <property type="entry name" value="LepA_CTD"/>
</dbReference>
<dbReference type="InterPro" id="IPR035654">
    <property type="entry name" value="LepA_IV"/>
</dbReference>
<dbReference type="InterPro" id="IPR027417">
    <property type="entry name" value="P-loop_NTPase"/>
</dbReference>
<dbReference type="InterPro" id="IPR005225">
    <property type="entry name" value="Small_GTP-bd"/>
</dbReference>
<dbReference type="InterPro" id="IPR000795">
    <property type="entry name" value="T_Tr_GTP-bd_dom"/>
</dbReference>
<dbReference type="NCBIfam" id="TIGR01393">
    <property type="entry name" value="lepA"/>
    <property type="match status" value="1"/>
</dbReference>
<dbReference type="NCBIfam" id="TIGR00231">
    <property type="entry name" value="small_GTP"/>
    <property type="match status" value="1"/>
</dbReference>
<dbReference type="PANTHER" id="PTHR43512:SF4">
    <property type="entry name" value="TRANSLATION FACTOR GUF1 HOMOLOG, CHLOROPLASTIC"/>
    <property type="match status" value="1"/>
</dbReference>
<dbReference type="PANTHER" id="PTHR43512">
    <property type="entry name" value="TRANSLATION FACTOR GUF1-RELATED"/>
    <property type="match status" value="1"/>
</dbReference>
<dbReference type="Pfam" id="PF00679">
    <property type="entry name" value="EFG_C"/>
    <property type="match status" value="1"/>
</dbReference>
<dbReference type="Pfam" id="PF00009">
    <property type="entry name" value="GTP_EFTU"/>
    <property type="match status" value="1"/>
</dbReference>
<dbReference type="Pfam" id="PF03144">
    <property type="entry name" value="GTP_EFTU_D2"/>
    <property type="match status" value="1"/>
</dbReference>
<dbReference type="Pfam" id="PF06421">
    <property type="entry name" value="LepA_C"/>
    <property type="match status" value="1"/>
</dbReference>
<dbReference type="PRINTS" id="PR00315">
    <property type="entry name" value="ELONGATNFCT"/>
</dbReference>
<dbReference type="SUPFAM" id="SSF54980">
    <property type="entry name" value="EF-G C-terminal domain-like"/>
    <property type="match status" value="2"/>
</dbReference>
<dbReference type="SUPFAM" id="SSF52540">
    <property type="entry name" value="P-loop containing nucleoside triphosphate hydrolases"/>
    <property type="match status" value="1"/>
</dbReference>
<dbReference type="PROSITE" id="PS00301">
    <property type="entry name" value="G_TR_1"/>
    <property type="match status" value="1"/>
</dbReference>
<dbReference type="PROSITE" id="PS51722">
    <property type="entry name" value="G_TR_2"/>
    <property type="match status" value="1"/>
</dbReference>
<gene>
    <name evidence="1" type="primary">lepA</name>
    <name type="ordered locus">KPN78578_28430</name>
    <name type="ORF">KPN_02894</name>
</gene>
<keyword id="KW-0997">Cell inner membrane</keyword>
<keyword id="KW-1003">Cell membrane</keyword>
<keyword id="KW-0342">GTP-binding</keyword>
<keyword id="KW-0378">Hydrolase</keyword>
<keyword id="KW-0472">Membrane</keyword>
<keyword id="KW-0547">Nucleotide-binding</keyword>
<keyword id="KW-0648">Protein biosynthesis</keyword>
<organism>
    <name type="scientific">Klebsiella pneumoniae subsp. pneumoniae (strain ATCC 700721 / MGH 78578)</name>
    <dbReference type="NCBI Taxonomy" id="272620"/>
    <lineage>
        <taxon>Bacteria</taxon>
        <taxon>Pseudomonadati</taxon>
        <taxon>Pseudomonadota</taxon>
        <taxon>Gammaproteobacteria</taxon>
        <taxon>Enterobacterales</taxon>
        <taxon>Enterobacteriaceae</taxon>
        <taxon>Klebsiella/Raoultella group</taxon>
        <taxon>Klebsiella</taxon>
        <taxon>Klebsiella pneumoniae complex</taxon>
    </lineage>
</organism>
<name>LEPA_KLEP7</name>
<reference key="1">
    <citation type="submission" date="2006-09" db="EMBL/GenBank/DDBJ databases">
        <authorList>
            <consortium name="The Klebsiella pneumonia Genome Sequencing Project"/>
            <person name="McClelland M."/>
            <person name="Sanderson E.K."/>
            <person name="Spieth J."/>
            <person name="Clifton W.S."/>
            <person name="Latreille P."/>
            <person name="Sabo A."/>
            <person name="Pepin K."/>
            <person name="Bhonagiri V."/>
            <person name="Porwollik S."/>
            <person name="Ali J."/>
            <person name="Wilson R.K."/>
        </authorList>
    </citation>
    <scope>NUCLEOTIDE SEQUENCE [LARGE SCALE GENOMIC DNA]</scope>
    <source>
        <strain>ATCC 700721 / MGH 78578</strain>
    </source>
</reference>
<evidence type="ECO:0000255" key="1">
    <source>
        <dbReference type="HAMAP-Rule" id="MF_00071"/>
    </source>
</evidence>
<comment type="function">
    <text evidence="1">Required for accurate and efficient protein synthesis under certain stress conditions. May act as a fidelity factor of the translation reaction, by catalyzing a one-codon backward translocation of tRNAs on improperly translocated ribosomes. Back-translocation proceeds from a post-translocation (POST) complex to a pre-translocation (PRE) complex, thus giving elongation factor G a second chance to translocate the tRNAs correctly. Binds to ribosomes in a GTP-dependent manner.</text>
</comment>
<comment type="catalytic activity">
    <reaction evidence="1">
        <text>GTP + H2O = GDP + phosphate + H(+)</text>
        <dbReference type="Rhea" id="RHEA:19669"/>
        <dbReference type="ChEBI" id="CHEBI:15377"/>
        <dbReference type="ChEBI" id="CHEBI:15378"/>
        <dbReference type="ChEBI" id="CHEBI:37565"/>
        <dbReference type="ChEBI" id="CHEBI:43474"/>
        <dbReference type="ChEBI" id="CHEBI:58189"/>
        <dbReference type="EC" id="3.6.5.n1"/>
    </reaction>
</comment>
<comment type="subcellular location">
    <subcellularLocation>
        <location evidence="1">Cell inner membrane</location>
        <topology evidence="1">Peripheral membrane protein</topology>
        <orientation evidence="1">Cytoplasmic side</orientation>
    </subcellularLocation>
</comment>
<comment type="similarity">
    <text evidence="1">Belongs to the TRAFAC class translation factor GTPase superfamily. Classic translation factor GTPase family. LepA subfamily.</text>
</comment>
<proteinExistence type="inferred from homology"/>
<accession>A6TCI3</accession>